<evidence type="ECO:0000255" key="1">
    <source>
        <dbReference type="HAMAP-Rule" id="MF_00911"/>
    </source>
</evidence>
<evidence type="ECO:0000255" key="2">
    <source>
        <dbReference type="PROSITE-ProRule" id="PRU01115"/>
    </source>
</evidence>
<evidence type="ECO:0000256" key="3">
    <source>
        <dbReference type="SAM" id="MobiDB-lite"/>
    </source>
</evidence>
<comment type="function">
    <text evidence="1">Essential cell division protein. May link together the upstream cell division proteins, which are predominantly cytoplasmic, with the downstream cell division proteins, which are predominantly periplasmic. May control correct divisome assembly.</text>
</comment>
<comment type="subunit">
    <text evidence="1">Part of a complex composed of FtsB, FtsL and FtsQ.</text>
</comment>
<comment type="subcellular location">
    <subcellularLocation>
        <location evidence="1">Cell inner membrane</location>
        <topology evidence="1">Single-pass type II membrane protein</topology>
    </subcellularLocation>
    <text evidence="1">Localizes to the division septum.</text>
</comment>
<comment type="similarity">
    <text evidence="1">Belongs to the FtsQ/DivIB family. FtsQ subfamily.</text>
</comment>
<reference key="1">
    <citation type="journal article" date="2005" name="Nucleic Acids Res.">
        <title>Genomic blueprint of Hahella chejuensis, a marine microbe producing an algicidal agent.</title>
        <authorList>
            <person name="Jeong H."/>
            <person name="Yim J.H."/>
            <person name="Lee C."/>
            <person name="Choi S.-H."/>
            <person name="Park Y.K."/>
            <person name="Yoon S.H."/>
            <person name="Hur C.-G."/>
            <person name="Kang H.-Y."/>
            <person name="Kim D."/>
            <person name="Lee H.H."/>
            <person name="Park K.H."/>
            <person name="Park S.-H."/>
            <person name="Park H.-S."/>
            <person name="Lee H.K."/>
            <person name="Oh T.K."/>
            <person name="Kim J.F."/>
        </authorList>
    </citation>
    <scope>NUCLEOTIDE SEQUENCE [LARGE SCALE GENOMIC DNA]</scope>
    <source>
        <strain>KCTC 2396</strain>
    </source>
</reference>
<name>FTSQ_HAHCH</name>
<protein>
    <recommendedName>
        <fullName evidence="1">Cell division protein FtsQ</fullName>
    </recommendedName>
</protein>
<dbReference type="EMBL" id="CP000155">
    <property type="protein sequence ID" value="ABC32529.1"/>
    <property type="molecule type" value="Genomic_DNA"/>
</dbReference>
<dbReference type="SMR" id="Q2S9Z5"/>
<dbReference type="STRING" id="349521.HCH_05880"/>
<dbReference type="KEGG" id="hch:HCH_05880"/>
<dbReference type="eggNOG" id="COG1589">
    <property type="taxonomic scope" value="Bacteria"/>
</dbReference>
<dbReference type="HOGENOM" id="CLU_064041_1_1_6"/>
<dbReference type="OrthoDB" id="9790370at2"/>
<dbReference type="Proteomes" id="UP000000238">
    <property type="component" value="Chromosome"/>
</dbReference>
<dbReference type="GO" id="GO:0032153">
    <property type="term" value="C:cell division site"/>
    <property type="evidence" value="ECO:0007669"/>
    <property type="project" value="UniProtKB-UniRule"/>
</dbReference>
<dbReference type="GO" id="GO:0005886">
    <property type="term" value="C:plasma membrane"/>
    <property type="evidence" value="ECO:0007669"/>
    <property type="project" value="UniProtKB-SubCell"/>
</dbReference>
<dbReference type="GO" id="GO:0090529">
    <property type="term" value="P:cell septum assembly"/>
    <property type="evidence" value="ECO:0007669"/>
    <property type="project" value="InterPro"/>
</dbReference>
<dbReference type="GO" id="GO:0043093">
    <property type="term" value="P:FtsZ-dependent cytokinesis"/>
    <property type="evidence" value="ECO:0007669"/>
    <property type="project" value="UniProtKB-UniRule"/>
</dbReference>
<dbReference type="Gene3D" id="3.40.50.11690">
    <property type="entry name" value="Cell division protein FtsQ/DivIB"/>
    <property type="match status" value="1"/>
</dbReference>
<dbReference type="Gene3D" id="3.10.20.310">
    <property type="entry name" value="membrane protein fhac"/>
    <property type="match status" value="1"/>
</dbReference>
<dbReference type="HAMAP" id="MF_00911">
    <property type="entry name" value="FtsQ_subfam"/>
    <property type="match status" value="1"/>
</dbReference>
<dbReference type="InterPro" id="IPR005548">
    <property type="entry name" value="Cell_div_FtsQ/DivIB_C"/>
</dbReference>
<dbReference type="InterPro" id="IPR026579">
    <property type="entry name" value="FtsQ"/>
</dbReference>
<dbReference type="InterPro" id="IPR045335">
    <property type="entry name" value="FtsQ_C_sf"/>
</dbReference>
<dbReference type="InterPro" id="IPR034746">
    <property type="entry name" value="POTRA"/>
</dbReference>
<dbReference type="InterPro" id="IPR013685">
    <property type="entry name" value="POTRA_FtsQ_type"/>
</dbReference>
<dbReference type="PANTHER" id="PTHR35851">
    <property type="entry name" value="CELL DIVISION PROTEIN FTSQ"/>
    <property type="match status" value="1"/>
</dbReference>
<dbReference type="PANTHER" id="PTHR35851:SF1">
    <property type="entry name" value="CELL DIVISION PROTEIN FTSQ"/>
    <property type="match status" value="1"/>
</dbReference>
<dbReference type="Pfam" id="PF03799">
    <property type="entry name" value="FtsQ_DivIB_C"/>
    <property type="match status" value="1"/>
</dbReference>
<dbReference type="Pfam" id="PF08478">
    <property type="entry name" value="POTRA_1"/>
    <property type="match status" value="1"/>
</dbReference>
<dbReference type="PROSITE" id="PS51779">
    <property type="entry name" value="POTRA"/>
    <property type="match status" value="1"/>
</dbReference>
<accession>Q2S9Z5</accession>
<sequence>MTPMKKQLDKSLGSRRGATATRAKERADNRNTGPAAIVRLLAFIPWNRVLLHVSIFCFWLLVLSALIAGVKWLDRPVATVQVVGELNYVSRGEVKELLSPLLHASFFTSDLEGVRKSLEAHPWVKRASISRLWPDAVQVDLEEEEPFVRWRNQGYINEAGRLFVKETGVVVNGLPALIGPPHSERLVFDNFQKWKAELAKVGLDVNGVIMESRGAWLISFTDGWELNLGKQDVEGRLHRFTVLFEKKLHQEREKIASVDARYTRGVAVKWKADVTPEQG</sequence>
<feature type="chain" id="PRO_0000414671" description="Cell division protein FtsQ">
    <location>
        <begin position="1"/>
        <end position="279"/>
    </location>
</feature>
<feature type="topological domain" description="Cytoplasmic" evidence="1">
    <location>
        <begin position="1"/>
        <end position="48"/>
    </location>
</feature>
<feature type="transmembrane region" description="Helical" evidence="1">
    <location>
        <begin position="49"/>
        <end position="69"/>
    </location>
</feature>
<feature type="topological domain" description="Periplasmic" evidence="1">
    <location>
        <begin position="70"/>
        <end position="279"/>
    </location>
</feature>
<feature type="domain" description="POTRA" evidence="2">
    <location>
        <begin position="75"/>
        <end position="144"/>
    </location>
</feature>
<feature type="region of interest" description="Disordered" evidence="3">
    <location>
        <begin position="1"/>
        <end position="28"/>
    </location>
</feature>
<proteinExistence type="inferred from homology"/>
<organism>
    <name type="scientific">Hahella chejuensis (strain KCTC 2396)</name>
    <dbReference type="NCBI Taxonomy" id="349521"/>
    <lineage>
        <taxon>Bacteria</taxon>
        <taxon>Pseudomonadati</taxon>
        <taxon>Pseudomonadota</taxon>
        <taxon>Gammaproteobacteria</taxon>
        <taxon>Oceanospirillales</taxon>
        <taxon>Hahellaceae</taxon>
        <taxon>Hahella</taxon>
    </lineage>
</organism>
<keyword id="KW-0131">Cell cycle</keyword>
<keyword id="KW-0132">Cell division</keyword>
<keyword id="KW-0997">Cell inner membrane</keyword>
<keyword id="KW-1003">Cell membrane</keyword>
<keyword id="KW-0472">Membrane</keyword>
<keyword id="KW-1185">Reference proteome</keyword>
<keyword id="KW-0812">Transmembrane</keyword>
<keyword id="KW-1133">Transmembrane helix</keyword>
<gene>
    <name evidence="1" type="primary">ftsQ</name>
    <name type="ordered locus">HCH_05880</name>
</gene>